<feature type="chain" id="PRO_0000363262" description="Probable protein phosphatase 2C 16">
    <location>
        <begin position="1"/>
        <end position="521"/>
    </location>
</feature>
<feature type="domain" description="PPM-type phosphatase" evidence="2">
    <location>
        <begin position="21"/>
        <end position="327"/>
    </location>
</feature>
<feature type="region of interest" description="Disordered" evidence="3">
    <location>
        <begin position="354"/>
        <end position="431"/>
    </location>
</feature>
<feature type="binding site" evidence="1">
    <location>
        <position position="57"/>
    </location>
    <ligand>
        <name>Mn(2+)</name>
        <dbReference type="ChEBI" id="CHEBI:29035"/>
        <label>1</label>
    </ligand>
</feature>
<feature type="binding site" evidence="1">
    <location>
        <position position="57"/>
    </location>
    <ligand>
        <name>Mn(2+)</name>
        <dbReference type="ChEBI" id="CHEBI:29035"/>
        <label>2</label>
    </ligand>
</feature>
<feature type="binding site" evidence="1">
    <location>
        <position position="58"/>
    </location>
    <ligand>
        <name>Mn(2+)</name>
        <dbReference type="ChEBI" id="CHEBI:29035"/>
        <label>1</label>
    </ligand>
</feature>
<feature type="binding site" evidence="1">
    <location>
        <position position="276"/>
    </location>
    <ligand>
        <name>Mn(2+)</name>
        <dbReference type="ChEBI" id="CHEBI:29035"/>
        <label>2</label>
    </ligand>
</feature>
<feature type="binding site" evidence="1">
    <location>
        <position position="318"/>
    </location>
    <ligand>
        <name>Mn(2+)</name>
        <dbReference type="ChEBI" id="CHEBI:29035"/>
        <label>2</label>
    </ligand>
</feature>
<gene>
    <name type="ordered locus">Os02g0599150</name>
    <name type="ordered locus">LOC_Os02g38580</name>
    <name type="ORF">OJ1212_D02.33</name>
    <name type="ORF">OSJNBa0038P01.17</name>
</gene>
<evidence type="ECO:0000250" key="1"/>
<evidence type="ECO:0000255" key="2">
    <source>
        <dbReference type="PROSITE-ProRule" id="PRU01082"/>
    </source>
</evidence>
<evidence type="ECO:0000256" key="3">
    <source>
        <dbReference type="SAM" id="MobiDB-lite"/>
    </source>
</evidence>
<evidence type="ECO:0000305" key="4"/>
<dbReference type="EC" id="3.1.3.16"/>
<dbReference type="EMBL" id="AP005384">
    <property type="protein sequence ID" value="BAD22134.1"/>
    <property type="molecule type" value="Genomic_DNA"/>
</dbReference>
<dbReference type="EMBL" id="AP006457">
    <property type="protein sequence ID" value="BAD22506.1"/>
    <property type="molecule type" value="Genomic_DNA"/>
</dbReference>
<dbReference type="EMBL" id="AP014958">
    <property type="protein sequence ID" value="BAS79580.1"/>
    <property type="molecule type" value="Genomic_DNA"/>
</dbReference>
<dbReference type="EMBL" id="AK106903">
    <property type="protein sequence ID" value="BAG97875.1"/>
    <property type="molecule type" value="mRNA"/>
</dbReference>
<dbReference type="RefSeq" id="XP_015625180.1">
    <property type="nucleotide sequence ID" value="XM_015769694.1"/>
</dbReference>
<dbReference type="RefSeq" id="XP_015625181.1">
    <property type="nucleotide sequence ID" value="XM_015769695.1"/>
</dbReference>
<dbReference type="SMR" id="Q6K1U4"/>
<dbReference type="FunCoup" id="Q6K1U4">
    <property type="interactions" value="1"/>
</dbReference>
<dbReference type="STRING" id="39947.Q6K1U4"/>
<dbReference type="PaxDb" id="39947-Q6K1U4"/>
<dbReference type="EnsemblPlants" id="Os02t0599150-01">
    <property type="protein sequence ID" value="Os02t0599150-01"/>
    <property type="gene ID" value="Os02g0599150"/>
</dbReference>
<dbReference type="GeneID" id="107276004"/>
<dbReference type="Gramene" id="Os02t0599150-01">
    <property type="protein sequence ID" value="Os02t0599150-01"/>
    <property type="gene ID" value="Os02g0599150"/>
</dbReference>
<dbReference type="eggNOG" id="KOG0698">
    <property type="taxonomic scope" value="Eukaryota"/>
</dbReference>
<dbReference type="HOGENOM" id="CLU_013173_4_1_1"/>
<dbReference type="InParanoid" id="Q6K1U4"/>
<dbReference type="OMA" id="PGTICEK"/>
<dbReference type="OrthoDB" id="693093at2759"/>
<dbReference type="Proteomes" id="UP000000763">
    <property type="component" value="Chromosome 2"/>
</dbReference>
<dbReference type="Proteomes" id="UP000059680">
    <property type="component" value="Chromosome 2"/>
</dbReference>
<dbReference type="GO" id="GO:0046872">
    <property type="term" value="F:metal ion binding"/>
    <property type="evidence" value="ECO:0007669"/>
    <property type="project" value="UniProtKB-KW"/>
</dbReference>
<dbReference type="GO" id="GO:0004722">
    <property type="term" value="F:protein serine/threonine phosphatase activity"/>
    <property type="evidence" value="ECO:0007669"/>
    <property type="project" value="UniProtKB-EC"/>
</dbReference>
<dbReference type="GO" id="GO:0007165">
    <property type="term" value="P:signal transduction"/>
    <property type="evidence" value="ECO:0000318"/>
    <property type="project" value="GO_Central"/>
</dbReference>
<dbReference type="CDD" id="cd00143">
    <property type="entry name" value="PP2Cc"/>
    <property type="match status" value="1"/>
</dbReference>
<dbReference type="FunFam" id="3.60.40.10:FF:000056">
    <property type="entry name" value="Probable protein phosphatase 2C 18"/>
    <property type="match status" value="1"/>
</dbReference>
<dbReference type="Gene3D" id="3.60.40.10">
    <property type="entry name" value="PPM-type phosphatase domain"/>
    <property type="match status" value="1"/>
</dbReference>
<dbReference type="InterPro" id="IPR015655">
    <property type="entry name" value="PP2C"/>
</dbReference>
<dbReference type="InterPro" id="IPR000222">
    <property type="entry name" value="PP2C_BS"/>
</dbReference>
<dbReference type="InterPro" id="IPR036457">
    <property type="entry name" value="PPM-type-like_dom_sf"/>
</dbReference>
<dbReference type="InterPro" id="IPR001932">
    <property type="entry name" value="PPM-type_phosphatase-like_dom"/>
</dbReference>
<dbReference type="PANTHER" id="PTHR13832">
    <property type="entry name" value="PROTEIN PHOSPHATASE 2C"/>
    <property type="match status" value="1"/>
</dbReference>
<dbReference type="PANTHER" id="PTHR13832:SF285">
    <property type="entry name" value="PROTEIN PHOSPHATASE 2C 22-RELATED"/>
    <property type="match status" value="1"/>
</dbReference>
<dbReference type="Pfam" id="PF00481">
    <property type="entry name" value="PP2C"/>
    <property type="match status" value="1"/>
</dbReference>
<dbReference type="SMART" id="SM00332">
    <property type="entry name" value="PP2Cc"/>
    <property type="match status" value="1"/>
</dbReference>
<dbReference type="SUPFAM" id="SSF81606">
    <property type="entry name" value="PP2C-like"/>
    <property type="match status" value="1"/>
</dbReference>
<dbReference type="PROSITE" id="PS01032">
    <property type="entry name" value="PPM_1"/>
    <property type="match status" value="1"/>
</dbReference>
<dbReference type="PROSITE" id="PS51746">
    <property type="entry name" value="PPM_2"/>
    <property type="match status" value="1"/>
</dbReference>
<name>P2C16_ORYSJ</name>
<sequence length="521" mass="56264">MGNSLPVESKFTFEEENDRIKYVVSSMQGWGEKMEDAHAAILNLDDATSTSFFGVYDGHGGAEVALYCAKQFHIELCNHEDYHNDLINALDNVFLSMDENLQQSDAWRELVIPHDNGCMYFLKAGVCAKPFPQATYTGPAYEGSTACVVVIRGNQMIVGHVGDSRCVLSRQGGLAIDLSFDHKPCTRTESERERVQNAGGRSLGLRCEQVMGNYVVKEQWVLGDFGGGVTISRSIGDFAFKKNKDLDREKQMLVCDPDILADDITDDMEFLVIASQGLWSCVDSADVVSYIHDRLSVEGAELRVICEEVVEFGLASGENTTVILVQFKPGAFQYQLVDPAGFGTAVSNIASTSAAPAGASDTSDEGVMADSCATADTSGSARAESGELVPTPSANNTVTDEVDPTGTVAADDKVDPNSSANADADDGAPKPSLGAVIESDEVALDATATGHQVAVRQQEEFDPKKCWICGKGYKKILLEPSSARARNPLLAHAKTCESEDKKAKKKITKYMMKANVTNQYH</sequence>
<keyword id="KW-0378">Hydrolase</keyword>
<keyword id="KW-0460">Magnesium</keyword>
<keyword id="KW-0464">Manganese</keyword>
<keyword id="KW-0479">Metal-binding</keyword>
<keyword id="KW-0904">Protein phosphatase</keyword>
<keyword id="KW-1185">Reference proteome</keyword>
<reference key="1">
    <citation type="journal article" date="2005" name="Nature">
        <title>The map-based sequence of the rice genome.</title>
        <authorList>
            <consortium name="International rice genome sequencing project (IRGSP)"/>
        </authorList>
    </citation>
    <scope>NUCLEOTIDE SEQUENCE [LARGE SCALE GENOMIC DNA]</scope>
    <source>
        <strain>cv. Nipponbare</strain>
    </source>
</reference>
<reference key="2">
    <citation type="journal article" date="2013" name="Rice">
        <title>Improvement of the Oryza sativa Nipponbare reference genome using next generation sequence and optical map data.</title>
        <authorList>
            <person name="Kawahara Y."/>
            <person name="de la Bastide M."/>
            <person name="Hamilton J.P."/>
            <person name="Kanamori H."/>
            <person name="McCombie W.R."/>
            <person name="Ouyang S."/>
            <person name="Schwartz D.C."/>
            <person name="Tanaka T."/>
            <person name="Wu J."/>
            <person name="Zhou S."/>
            <person name="Childs K.L."/>
            <person name="Davidson R.M."/>
            <person name="Lin H."/>
            <person name="Quesada-Ocampo L."/>
            <person name="Vaillancourt B."/>
            <person name="Sakai H."/>
            <person name="Lee S.S."/>
            <person name="Kim J."/>
            <person name="Numa H."/>
            <person name="Itoh T."/>
            <person name="Buell C.R."/>
            <person name="Matsumoto T."/>
        </authorList>
    </citation>
    <scope>GENOME REANNOTATION</scope>
    <source>
        <strain>cv. Nipponbare</strain>
    </source>
</reference>
<reference key="3">
    <citation type="journal article" date="2003" name="Science">
        <title>Collection, mapping, and annotation of over 28,000 cDNA clones from japonica rice.</title>
        <authorList>
            <consortium name="The rice full-length cDNA consortium"/>
        </authorList>
    </citation>
    <scope>NUCLEOTIDE SEQUENCE [LARGE SCALE MRNA]</scope>
    <source>
        <strain>cv. Nipponbare</strain>
    </source>
</reference>
<reference key="4">
    <citation type="journal article" date="2008" name="BMC Genomics">
        <title>Genome-wide and expression analysis of protein phosphatase 2C in rice and Arabidopsis.</title>
        <authorList>
            <person name="Xue T."/>
            <person name="Wang D."/>
            <person name="Zhang S."/>
            <person name="Ehlting J."/>
            <person name="Ni F."/>
            <person name="Jacab S."/>
            <person name="Zheng C."/>
            <person name="Zhong Y."/>
        </authorList>
    </citation>
    <scope>GENE FAMILY</scope>
    <scope>NOMENCLATURE</scope>
</reference>
<organism>
    <name type="scientific">Oryza sativa subsp. japonica</name>
    <name type="common">Rice</name>
    <dbReference type="NCBI Taxonomy" id="39947"/>
    <lineage>
        <taxon>Eukaryota</taxon>
        <taxon>Viridiplantae</taxon>
        <taxon>Streptophyta</taxon>
        <taxon>Embryophyta</taxon>
        <taxon>Tracheophyta</taxon>
        <taxon>Spermatophyta</taxon>
        <taxon>Magnoliopsida</taxon>
        <taxon>Liliopsida</taxon>
        <taxon>Poales</taxon>
        <taxon>Poaceae</taxon>
        <taxon>BOP clade</taxon>
        <taxon>Oryzoideae</taxon>
        <taxon>Oryzeae</taxon>
        <taxon>Oryzinae</taxon>
        <taxon>Oryza</taxon>
        <taxon>Oryza sativa</taxon>
    </lineage>
</organism>
<proteinExistence type="evidence at transcript level"/>
<comment type="catalytic activity">
    <reaction>
        <text>O-phospho-L-seryl-[protein] + H2O = L-seryl-[protein] + phosphate</text>
        <dbReference type="Rhea" id="RHEA:20629"/>
        <dbReference type="Rhea" id="RHEA-COMP:9863"/>
        <dbReference type="Rhea" id="RHEA-COMP:11604"/>
        <dbReference type="ChEBI" id="CHEBI:15377"/>
        <dbReference type="ChEBI" id="CHEBI:29999"/>
        <dbReference type="ChEBI" id="CHEBI:43474"/>
        <dbReference type="ChEBI" id="CHEBI:83421"/>
        <dbReference type="EC" id="3.1.3.16"/>
    </reaction>
</comment>
<comment type="catalytic activity">
    <reaction>
        <text>O-phospho-L-threonyl-[protein] + H2O = L-threonyl-[protein] + phosphate</text>
        <dbReference type="Rhea" id="RHEA:47004"/>
        <dbReference type="Rhea" id="RHEA-COMP:11060"/>
        <dbReference type="Rhea" id="RHEA-COMP:11605"/>
        <dbReference type="ChEBI" id="CHEBI:15377"/>
        <dbReference type="ChEBI" id="CHEBI:30013"/>
        <dbReference type="ChEBI" id="CHEBI:43474"/>
        <dbReference type="ChEBI" id="CHEBI:61977"/>
        <dbReference type="EC" id="3.1.3.16"/>
    </reaction>
</comment>
<comment type="cofactor">
    <cofactor evidence="1">
        <name>Mg(2+)</name>
        <dbReference type="ChEBI" id="CHEBI:18420"/>
    </cofactor>
    <cofactor evidence="1">
        <name>Mn(2+)</name>
        <dbReference type="ChEBI" id="CHEBI:29035"/>
    </cofactor>
    <text evidence="1">Binds 2 magnesium or manganese ions per subunit.</text>
</comment>
<comment type="similarity">
    <text evidence="4">Belongs to the PP2C family.</text>
</comment>
<protein>
    <recommendedName>
        <fullName>Probable protein phosphatase 2C 16</fullName>
        <shortName>OsPP2C16</shortName>
        <ecNumber>3.1.3.16</ecNumber>
    </recommendedName>
</protein>
<accession>Q6K1U4</accession>
<accession>A0A0P0VL43</accession>